<feature type="chain" id="PRO_1000165115" description="Pimeloyl-[acyl-carrier protein] methyl ester esterase">
    <location>
        <begin position="1"/>
        <end position="256"/>
    </location>
</feature>
<feature type="domain" description="AB hydrolase-1" evidence="1">
    <location>
        <begin position="15"/>
        <end position="242"/>
    </location>
</feature>
<feature type="active site" description="Nucleophile" evidence="2">
    <location>
        <position position="82"/>
    </location>
</feature>
<feature type="active site" evidence="2">
    <location>
        <position position="207"/>
    </location>
</feature>
<feature type="active site" evidence="2">
    <location>
        <position position="235"/>
    </location>
</feature>
<feature type="binding site" evidence="2">
    <location>
        <position position="22"/>
    </location>
    <ligand>
        <name>substrate</name>
    </ligand>
</feature>
<feature type="binding site" evidence="2">
    <location>
        <begin position="82"/>
        <end position="83"/>
    </location>
    <ligand>
        <name>substrate</name>
    </ligand>
</feature>
<feature type="binding site" evidence="2">
    <location>
        <begin position="143"/>
        <end position="147"/>
    </location>
    <ligand>
        <name>substrate</name>
    </ligand>
</feature>
<feature type="binding site" evidence="2">
    <location>
        <position position="235"/>
    </location>
    <ligand>
        <name>substrate</name>
    </ligand>
</feature>
<protein>
    <recommendedName>
        <fullName evidence="2">Pimeloyl-[acyl-carrier protein] methyl ester esterase</fullName>
        <ecNumber evidence="2">3.1.1.85</ecNumber>
    </recommendedName>
    <alternativeName>
        <fullName evidence="2">Biotin synthesis protein BioH</fullName>
    </alternativeName>
    <alternativeName>
        <fullName evidence="2">Carboxylesterase BioH</fullName>
    </alternativeName>
</protein>
<proteinExistence type="inferred from homology"/>
<dbReference type="EC" id="3.1.1.85" evidence="2"/>
<dbReference type="EMBL" id="CU928162">
    <property type="protein sequence ID" value="CAR10063.1"/>
    <property type="molecule type" value="Genomic_DNA"/>
</dbReference>
<dbReference type="RefSeq" id="WP_001060052.1">
    <property type="nucleotide sequence ID" value="NC_011745.1"/>
</dbReference>
<dbReference type="SMR" id="B7N145"/>
<dbReference type="ESTHER" id="ecoli-bioh">
    <property type="family name" value="BioH"/>
</dbReference>
<dbReference type="MEROPS" id="S33.994"/>
<dbReference type="KEGG" id="ecq:ECED1_4072"/>
<dbReference type="HOGENOM" id="CLU_020336_12_2_6"/>
<dbReference type="UniPathway" id="UPA00078"/>
<dbReference type="Proteomes" id="UP000000748">
    <property type="component" value="Chromosome"/>
</dbReference>
<dbReference type="GO" id="GO:0005737">
    <property type="term" value="C:cytoplasm"/>
    <property type="evidence" value="ECO:0007669"/>
    <property type="project" value="UniProtKB-SubCell"/>
</dbReference>
<dbReference type="GO" id="GO:0090499">
    <property type="term" value="F:pimelyl-[acyl-carrier protein] methyl ester esterase activity"/>
    <property type="evidence" value="ECO:0007669"/>
    <property type="project" value="UniProtKB-EC"/>
</dbReference>
<dbReference type="GO" id="GO:0009102">
    <property type="term" value="P:biotin biosynthetic process"/>
    <property type="evidence" value="ECO:0007669"/>
    <property type="project" value="UniProtKB-UniRule"/>
</dbReference>
<dbReference type="FunFam" id="3.40.50.1820:FF:000045">
    <property type="entry name" value="Pimeloyl-[acyl-carrier protein] methyl ester esterase"/>
    <property type="match status" value="1"/>
</dbReference>
<dbReference type="Gene3D" id="3.40.50.1820">
    <property type="entry name" value="alpha/beta hydrolase"/>
    <property type="match status" value="1"/>
</dbReference>
<dbReference type="HAMAP" id="MF_01260">
    <property type="entry name" value="Carboxylester"/>
    <property type="match status" value="1"/>
</dbReference>
<dbReference type="InterPro" id="IPR000073">
    <property type="entry name" value="AB_hydrolase_1"/>
</dbReference>
<dbReference type="InterPro" id="IPR029058">
    <property type="entry name" value="AB_hydrolase_fold"/>
</dbReference>
<dbReference type="InterPro" id="IPR010076">
    <property type="entry name" value="BioH"/>
</dbReference>
<dbReference type="InterPro" id="IPR050228">
    <property type="entry name" value="Carboxylesterase_BioH"/>
</dbReference>
<dbReference type="NCBIfam" id="TIGR01738">
    <property type="entry name" value="bioH"/>
    <property type="match status" value="1"/>
</dbReference>
<dbReference type="NCBIfam" id="NF007674">
    <property type="entry name" value="PRK10349.1"/>
    <property type="match status" value="1"/>
</dbReference>
<dbReference type="PANTHER" id="PTHR43194">
    <property type="entry name" value="HYDROLASE ALPHA/BETA FOLD FAMILY"/>
    <property type="match status" value="1"/>
</dbReference>
<dbReference type="PANTHER" id="PTHR43194:SF5">
    <property type="entry name" value="PIMELOYL-[ACYL-CARRIER PROTEIN] METHYL ESTER ESTERASE"/>
    <property type="match status" value="1"/>
</dbReference>
<dbReference type="Pfam" id="PF00561">
    <property type="entry name" value="Abhydrolase_1"/>
    <property type="match status" value="1"/>
</dbReference>
<dbReference type="SUPFAM" id="SSF53474">
    <property type="entry name" value="alpha/beta-Hydrolases"/>
    <property type="match status" value="1"/>
</dbReference>
<gene>
    <name evidence="2" type="primary">bioH</name>
    <name type="ordered locus">ECED1_4072</name>
</gene>
<sequence>MNNIWWHTKGQGNVHLVLLHGWGLNAGVWRCIDEELSSHFTLHLVDLPGFGRSRGFGALSLADMAEVVLRQAPDKAIWLGWSLGGLVASQIALTHPERVQALVTVASSPCFSARDEWPGIKPDVLAGFQQQLSDDFQRTVERFLALQTMGTETARQDARALKKTVLALPMPEVDVLNGGLEILKTVDLRQPLQNVPMPFLRLYGYLDGLVPRKVVPMLDKLWPHSESYIFAKAAHAPFISHPDEFCHLLVALKQRV</sequence>
<accession>B7N145</accession>
<comment type="function">
    <text evidence="2">The physiological role of BioH is to remove the methyl group introduced by BioC when the pimeloyl moiety is complete. It allows to synthesize pimeloyl-ACP via the fatty acid synthetic pathway through the hydrolysis of the ester bonds of pimeloyl-ACP esters.</text>
</comment>
<comment type="catalytic activity">
    <reaction evidence="2">
        <text>6-carboxyhexanoyl-[ACP] methyl ester + H2O = 6-carboxyhexanoyl-[ACP] + methanol + H(+)</text>
        <dbReference type="Rhea" id="RHEA:42700"/>
        <dbReference type="Rhea" id="RHEA-COMP:9955"/>
        <dbReference type="Rhea" id="RHEA-COMP:10186"/>
        <dbReference type="ChEBI" id="CHEBI:15377"/>
        <dbReference type="ChEBI" id="CHEBI:15378"/>
        <dbReference type="ChEBI" id="CHEBI:17790"/>
        <dbReference type="ChEBI" id="CHEBI:78846"/>
        <dbReference type="ChEBI" id="CHEBI:82735"/>
        <dbReference type="EC" id="3.1.1.85"/>
    </reaction>
</comment>
<comment type="pathway">
    <text evidence="2">Cofactor biosynthesis; biotin biosynthesis.</text>
</comment>
<comment type="subunit">
    <text evidence="2">Monomer.</text>
</comment>
<comment type="subcellular location">
    <subcellularLocation>
        <location evidence="2">Cytoplasm</location>
    </subcellularLocation>
</comment>
<comment type="similarity">
    <text evidence="2">Belongs to the AB hydrolase superfamily. Carboxylesterase BioH family.</text>
</comment>
<reference key="1">
    <citation type="journal article" date="2009" name="PLoS Genet.">
        <title>Organised genome dynamics in the Escherichia coli species results in highly diverse adaptive paths.</title>
        <authorList>
            <person name="Touchon M."/>
            <person name="Hoede C."/>
            <person name="Tenaillon O."/>
            <person name="Barbe V."/>
            <person name="Baeriswyl S."/>
            <person name="Bidet P."/>
            <person name="Bingen E."/>
            <person name="Bonacorsi S."/>
            <person name="Bouchier C."/>
            <person name="Bouvet O."/>
            <person name="Calteau A."/>
            <person name="Chiapello H."/>
            <person name="Clermont O."/>
            <person name="Cruveiller S."/>
            <person name="Danchin A."/>
            <person name="Diard M."/>
            <person name="Dossat C."/>
            <person name="Karoui M.E."/>
            <person name="Frapy E."/>
            <person name="Garry L."/>
            <person name="Ghigo J.M."/>
            <person name="Gilles A.M."/>
            <person name="Johnson J."/>
            <person name="Le Bouguenec C."/>
            <person name="Lescat M."/>
            <person name="Mangenot S."/>
            <person name="Martinez-Jehanne V."/>
            <person name="Matic I."/>
            <person name="Nassif X."/>
            <person name="Oztas S."/>
            <person name="Petit M.A."/>
            <person name="Pichon C."/>
            <person name="Rouy Z."/>
            <person name="Ruf C.S."/>
            <person name="Schneider D."/>
            <person name="Tourret J."/>
            <person name="Vacherie B."/>
            <person name="Vallenet D."/>
            <person name="Medigue C."/>
            <person name="Rocha E.P.C."/>
            <person name="Denamur E."/>
        </authorList>
    </citation>
    <scope>NUCLEOTIDE SEQUENCE [LARGE SCALE GENOMIC DNA]</scope>
    <source>
        <strain>ED1a</strain>
    </source>
</reference>
<organism>
    <name type="scientific">Escherichia coli O81 (strain ED1a)</name>
    <dbReference type="NCBI Taxonomy" id="585397"/>
    <lineage>
        <taxon>Bacteria</taxon>
        <taxon>Pseudomonadati</taxon>
        <taxon>Pseudomonadota</taxon>
        <taxon>Gammaproteobacteria</taxon>
        <taxon>Enterobacterales</taxon>
        <taxon>Enterobacteriaceae</taxon>
        <taxon>Escherichia</taxon>
    </lineage>
</organism>
<keyword id="KW-0093">Biotin biosynthesis</keyword>
<keyword id="KW-0963">Cytoplasm</keyword>
<keyword id="KW-0378">Hydrolase</keyword>
<keyword id="KW-0719">Serine esterase</keyword>
<name>BIOH_ECO81</name>
<evidence type="ECO:0000255" key="1"/>
<evidence type="ECO:0000255" key="2">
    <source>
        <dbReference type="HAMAP-Rule" id="MF_01260"/>
    </source>
</evidence>